<evidence type="ECO:0000255" key="1">
    <source>
        <dbReference type="HAMAP-Rule" id="MF_01209"/>
    </source>
</evidence>
<feature type="chain" id="PRO_0000112320" description="Carbamoyl phosphate synthase small chain">
    <location>
        <begin position="1"/>
        <end position="366"/>
    </location>
</feature>
<feature type="domain" description="Glutamine amidotransferase type-1" evidence="1">
    <location>
        <begin position="173"/>
        <end position="360"/>
    </location>
</feature>
<feature type="region of interest" description="CPSase" evidence="1">
    <location>
        <begin position="1"/>
        <end position="171"/>
    </location>
</feature>
<feature type="active site" description="Nucleophile" evidence="1">
    <location>
        <position position="248"/>
    </location>
</feature>
<feature type="active site" evidence="1">
    <location>
        <position position="333"/>
    </location>
</feature>
<feature type="active site" evidence="1">
    <location>
        <position position="335"/>
    </location>
</feature>
<feature type="binding site" evidence="1">
    <location>
        <position position="47"/>
    </location>
    <ligand>
        <name>L-glutamine</name>
        <dbReference type="ChEBI" id="CHEBI:58359"/>
    </ligand>
</feature>
<feature type="binding site" evidence="1">
    <location>
        <position position="221"/>
    </location>
    <ligand>
        <name>L-glutamine</name>
        <dbReference type="ChEBI" id="CHEBI:58359"/>
    </ligand>
</feature>
<feature type="binding site" evidence="1">
    <location>
        <position position="223"/>
    </location>
    <ligand>
        <name>L-glutamine</name>
        <dbReference type="ChEBI" id="CHEBI:58359"/>
    </ligand>
</feature>
<feature type="binding site" evidence="1">
    <location>
        <position position="249"/>
    </location>
    <ligand>
        <name>L-glutamine</name>
        <dbReference type="ChEBI" id="CHEBI:58359"/>
    </ligand>
</feature>
<feature type="binding site" evidence="1">
    <location>
        <position position="252"/>
    </location>
    <ligand>
        <name>L-glutamine</name>
        <dbReference type="ChEBI" id="CHEBI:58359"/>
    </ligand>
</feature>
<feature type="binding site" evidence="1">
    <location>
        <position position="290"/>
    </location>
    <ligand>
        <name>L-glutamine</name>
        <dbReference type="ChEBI" id="CHEBI:58359"/>
    </ligand>
</feature>
<feature type="binding site" evidence="1">
    <location>
        <position position="292"/>
    </location>
    <ligand>
        <name>L-glutamine</name>
        <dbReference type="ChEBI" id="CHEBI:58359"/>
    </ligand>
</feature>
<feature type="binding site" evidence="1">
    <location>
        <position position="293"/>
    </location>
    <ligand>
        <name>L-glutamine</name>
        <dbReference type="ChEBI" id="CHEBI:58359"/>
    </ligand>
</feature>
<name>CARA_STAAW</name>
<accession>P63730</accession>
<accession>Q99UR6</accession>
<dbReference type="EC" id="6.3.5.5" evidence="1"/>
<dbReference type="EMBL" id="BA000033">
    <property type="protein sequence ID" value="BAB94950.1"/>
    <property type="molecule type" value="Genomic_DNA"/>
</dbReference>
<dbReference type="RefSeq" id="WP_001190913.1">
    <property type="nucleotide sequence ID" value="NC_003923.1"/>
</dbReference>
<dbReference type="SMR" id="P63730"/>
<dbReference type="KEGG" id="sam:MW1085"/>
<dbReference type="HOGENOM" id="CLU_035901_2_1_9"/>
<dbReference type="UniPathway" id="UPA00068">
    <property type="reaction ID" value="UER00171"/>
</dbReference>
<dbReference type="UniPathway" id="UPA00070">
    <property type="reaction ID" value="UER00115"/>
</dbReference>
<dbReference type="GO" id="GO:0005524">
    <property type="term" value="F:ATP binding"/>
    <property type="evidence" value="ECO:0007669"/>
    <property type="project" value="UniProtKB-UniRule"/>
</dbReference>
<dbReference type="GO" id="GO:0004088">
    <property type="term" value="F:carbamoyl-phosphate synthase (glutamine-hydrolyzing) activity"/>
    <property type="evidence" value="ECO:0007669"/>
    <property type="project" value="UniProtKB-UniRule"/>
</dbReference>
<dbReference type="GO" id="GO:0004359">
    <property type="term" value="F:glutaminase activity"/>
    <property type="evidence" value="ECO:0007669"/>
    <property type="project" value="RHEA"/>
</dbReference>
<dbReference type="GO" id="GO:0006207">
    <property type="term" value="P:'de novo' pyrimidine nucleobase biosynthetic process"/>
    <property type="evidence" value="ECO:0007669"/>
    <property type="project" value="InterPro"/>
</dbReference>
<dbReference type="GO" id="GO:0044205">
    <property type="term" value="P:'de novo' UMP biosynthetic process"/>
    <property type="evidence" value="ECO:0007669"/>
    <property type="project" value="UniProtKB-UniRule"/>
</dbReference>
<dbReference type="GO" id="GO:0006541">
    <property type="term" value="P:glutamine metabolic process"/>
    <property type="evidence" value="ECO:0007669"/>
    <property type="project" value="InterPro"/>
</dbReference>
<dbReference type="GO" id="GO:0006526">
    <property type="term" value="P:L-arginine biosynthetic process"/>
    <property type="evidence" value="ECO:0007669"/>
    <property type="project" value="UniProtKB-UniRule"/>
</dbReference>
<dbReference type="CDD" id="cd01744">
    <property type="entry name" value="GATase1_CPSase"/>
    <property type="match status" value="1"/>
</dbReference>
<dbReference type="FunFam" id="3.40.50.880:FF:000029">
    <property type="entry name" value="Carbamoyl-phosphate synthase small chain"/>
    <property type="match status" value="1"/>
</dbReference>
<dbReference type="FunFam" id="3.50.30.20:FF:000001">
    <property type="entry name" value="Carbamoyl-phosphate synthase small chain"/>
    <property type="match status" value="1"/>
</dbReference>
<dbReference type="Gene3D" id="3.40.50.880">
    <property type="match status" value="1"/>
</dbReference>
<dbReference type="Gene3D" id="3.50.30.20">
    <property type="entry name" value="Carbamoyl-phosphate synthase small subunit, N-terminal domain"/>
    <property type="match status" value="1"/>
</dbReference>
<dbReference type="HAMAP" id="MF_01209">
    <property type="entry name" value="CPSase_S_chain"/>
    <property type="match status" value="1"/>
</dbReference>
<dbReference type="InterPro" id="IPR050472">
    <property type="entry name" value="Anth_synth/Amidotransfase"/>
</dbReference>
<dbReference type="InterPro" id="IPR006274">
    <property type="entry name" value="CarbamoylP_synth_ssu"/>
</dbReference>
<dbReference type="InterPro" id="IPR002474">
    <property type="entry name" value="CarbamoylP_synth_ssu_N"/>
</dbReference>
<dbReference type="InterPro" id="IPR036480">
    <property type="entry name" value="CarbP_synth_ssu_N_sf"/>
</dbReference>
<dbReference type="InterPro" id="IPR029062">
    <property type="entry name" value="Class_I_gatase-like"/>
</dbReference>
<dbReference type="InterPro" id="IPR035686">
    <property type="entry name" value="CPSase_GATase1"/>
</dbReference>
<dbReference type="InterPro" id="IPR017926">
    <property type="entry name" value="GATASE"/>
</dbReference>
<dbReference type="NCBIfam" id="TIGR01368">
    <property type="entry name" value="CPSaseIIsmall"/>
    <property type="match status" value="1"/>
</dbReference>
<dbReference type="NCBIfam" id="NF009475">
    <property type="entry name" value="PRK12838.1"/>
    <property type="match status" value="1"/>
</dbReference>
<dbReference type="PANTHER" id="PTHR43418:SF7">
    <property type="entry name" value="CARBAMOYL-PHOSPHATE SYNTHASE SMALL CHAIN"/>
    <property type="match status" value="1"/>
</dbReference>
<dbReference type="PANTHER" id="PTHR43418">
    <property type="entry name" value="MULTIFUNCTIONAL TRYPTOPHAN BIOSYNTHESIS PROTEIN-RELATED"/>
    <property type="match status" value="1"/>
</dbReference>
<dbReference type="Pfam" id="PF00988">
    <property type="entry name" value="CPSase_sm_chain"/>
    <property type="match status" value="1"/>
</dbReference>
<dbReference type="Pfam" id="PF00117">
    <property type="entry name" value="GATase"/>
    <property type="match status" value="1"/>
</dbReference>
<dbReference type="PRINTS" id="PR00097">
    <property type="entry name" value="ANTSNTHASEII"/>
</dbReference>
<dbReference type="PRINTS" id="PR00099">
    <property type="entry name" value="CPSGATASE"/>
</dbReference>
<dbReference type="PRINTS" id="PR00096">
    <property type="entry name" value="GATASE"/>
</dbReference>
<dbReference type="SMART" id="SM01097">
    <property type="entry name" value="CPSase_sm_chain"/>
    <property type="match status" value="1"/>
</dbReference>
<dbReference type="SUPFAM" id="SSF52021">
    <property type="entry name" value="Carbamoyl phosphate synthetase, small subunit N-terminal domain"/>
    <property type="match status" value="1"/>
</dbReference>
<dbReference type="SUPFAM" id="SSF52317">
    <property type="entry name" value="Class I glutamine amidotransferase-like"/>
    <property type="match status" value="1"/>
</dbReference>
<dbReference type="PROSITE" id="PS51273">
    <property type="entry name" value="GATASE_TYPE_1"/>
    <property type="match status" value="1"/>
</dbReference>
<keyword id="KW-0028">Amino-acid biosynthesis</keyword>
<keyword id="KW-0055">Arginine biosynthesis</keyword>
<keyword id="KW-0067">ATP-binding</keyword>
<keyword id="KW-0315">Glutamine amidotransferase</keyword>
<keyword id="KW-0436">Ligase</keyword>
<keyword id="KW-0547">Nucleotide-binding</keyword>
<keyword id="KW-0665">Pyrimidine biosynthesis</keyword>
<sequence>MQSKRYLVLEDGSFYEGYRLGSDNLTVGEIVFNTAMTGYQETISDPSYTGQIITFTYPLIGNYGINRDDFESLVPTLNGIVVKEASAHPSNFRQQKTLHDVLELHQIPGIAGVDTRSITRKIRQHGVLKAGFTDRKEDIDQLVKHLQQVELPKNEVEIVSTKTPYVSTGKDLSVVLVDFGKKQNIVRELNVRGCNVTVVPYTTTAEEILAMAPDGVMLSNGPGNPEVVECAIPMIQGILGKIPFFGICLGHQLFALSQGASSFKMKFGHRGANHPVKNLETGKVDITSQNHGYAIDIDSLKSTDLEVTHLALNDGTVEGLKHKTLPAFSVQYHPEANPGPSDSNYLFDDFVAMMTNFKEKERHINA</sequence>
<gene>
    <name evidence="1" type="primary">carA</name>
    <name type="synonym">pyrAA</name>
    <name type="ordered locus">MW1085</name>
</gene>
<reference key="1">
    <citation type="journal article" date="2002" name="Lancet">
        <title>Genome and virulence determinants of high virulence community-acquired MRSA.</title>
        <authorList>
            <person name="Baba T."/>
            <person name="Takeuchi F."/>
            <person name="Kuroda M."/>
            <person name="Yuzawa H."/>
            <person name="Aoki K."/>
            <person name="Oguchi A."/>
            <person name="Nagai Y."/>
            <person name="Iwama N."/>
            <person name="Asano K."/>
            <person name="Naimi T."/>
            <person name="Kuroda H."/>
            <person name="Cui L."/>
            <person name="Yamamoto K."/>
            <person name="Hiramatsu K."/>
        </authorList>
    </citation>
    <scope>NUCLEOTIDE SEQUENCE [LARGE SCALE GENOMIC DNA]</scope>
    <source>
        <strain>MW2</strain>
    </source>
</reference>
<comment type="function">
    <text evidence="1">Small subunit of the glutamine-dependent carbamoyl phosphate synthetase (CPSase). CPSase catalyzes the formation of carbamoyl phosphate from the ammonia moiety of glutamine, carbonate, and phosphate donated by ATP, constituting the first step of 2 biosynthetic pathways, one leading to arginine and/or urea and the other to pyrimidine nucleotides. The small subunit (glutamine amidotransferase) binds and cleaves glutamine to supply the large subunit with the substrate ammonia.</text>
</comment>
<comment type="catalytic activity">
    <reaction evidence="1">
        <text>hydrogencarbonate + L-glutamine + 2 ATP + H2O = carbamoyl phosphate + L-glutamate + 2 ADP + phosphate + 2 H(+)</text>
        <dbReference type="Rhea" id="RHEA:18633"/>
        <dbReference type="ChEBI" id="CHEBI:15377"/>
        <dbReference type="ChEBI" id="CHEBI:15378"/>
        <dbReference type="ChEBI" id="CHEBI:17544"/>
        <dbReference type="ChEBI" id="CHEBI:29985"/>
        <dbReference type="ChEBI" id="CHEBI:30616"/>
        <dbReference type="ChEBI" id="CHEBI:43474"/>
        <dbReference type="ChEBI" id="CHEBI:58228"/>
        <dbReference type="ChEBI" id="CHEBI:58359"/>
        <dbReference type="ChEBI" id="CHEBI:456216"/>
        <dbReference type="EC" id="6.3.5.5"/>
    </reaction>
</comment>
<comment type="catalytic activity">
    <molecule>Carbamoyl phosphate synthase small chain</molecule>
    <reaction evidence="1">
        <text>L-glutamine + H2O = L-glutamate + NH4(+)</text>
        <dbReference type="Rhea" id="RHEA:15889"/>
        <dbReference type="ChEBI" id="CHEBI:15377"/>
        <dbReference type="ChEBI" id="CHEBI:28938"/>
        <dbReference type="ChEBI" id="CHEBI:29985"/>
        <dbReference type="ChEBI" id="CHEBI:58359"/>
    </reaction>
</comment>
<comment type="pathway">
    <text evidence="1">Amino-acid biosynthesis; L-arginine biosynthesis; carbamoyl phosphate from bicarbonate: step 1/1.</text>
</comment>
<comment type="pathway">
    <text evidence="1">Pyrimidine metabolism; UMP biosynthesis via de novo pathway; (S)-dihydroorotate from bicarbonate: step 1/3.</text>
</comment>
<comment type="subunit">
    <text evidence="1">Composed of two chains; the small (or glutamine) chain promotes the hydrolysis of glutamine to ammonia, which is used by the large (or ammonia) chain to synthesize carbamoyl phosphate. Tetramer of heterodimers (alpha,beta)4.</text>
</comment>
<comment type="similarity">
    <text evidence="1">Belongs to the CarA family.</text>
</comment>
<organism>
    <name type="scientific">Staphylococcus aureus (strain MW2)</name>
    <dbReference type="NCBI Taxonomy" id="196620"/>
    <lineage>
        <taxon>Bacteria</taxon>
        <taxon>Bacillati</taxon>
        <taxon>Bacillota</taxon>
        <taxon>Bacilli</taxon>
        <taxon>Bacillales</taxon>
        <taxon>Staphylococcaceae</taxon>
        <taxon>Staphylococcus</taxon>
    </lineage>
</organism>
<proteinExistence type="inferred from homology"/>
<protein>
    <recommendedName>
        <fullName evidence="1">Carbamoyl phosphate synthase small chain</fullName>
        <ecNumber evidence="1">6.3.5.5</ecNumber>
    </recommendedName>
    <alternativeName>
        <fullName evidence="1">Carbamoyl phosphate synthetase glutamine chain</fullName>
    </alternativeName>
</protein>